<feature type="chain" id="PRO_0000059105" description="Galactofuranosyl glycosyltransferase">
    <location>
        <begin position="1"/>
        <end position="434"/>
    </location>
</feature>
<feature type="topological domain" description="Cytoplasmic" evidence="1">
    <location>
        <begin position="1"/>
        <end position="18"/>
    </location>
</feature>
<feature type="transmembrane region" description="Helical; Signal-anchor for type II membrane protein">
    <location>
        <begin position="19"/>
        <end position="38"/>
    </location>
</feature>
<feature type="topological domain" description="Lumenal" evidence="1">
    <location>
        <begin position="39"/>
        <end position="434"/>
    </location>
</feature>
<feature type="glycosylation site" description="N-linked (GlcNAc...) asparagine" evidence="1">
    <location>
        <position position="39"/>
    </location>
</feature>
<feature type="glycosylation site" description="N-linked (GlcNAc...) asparagine" evidence="1">
    <location>
        <position position="100"/>
    </location>
</feature>
<feature type="glycosylation site" description="N-linked (GlcNAc...) asparagine" evidence="1">
    <location>
        <position position="162"/>
    </location>
</feature>
<feature type="glycosylation site" description="N-linked (GlcNAc...) asparagine" evidence="1">
    <location>
        <position position="388"/>
    </location>
</feature>
<comment type="function">
    <text>Glycosyltransferase that may be responsible for the addition of galactofuranosyl residues to the nascent lipophosphoglycan (LPG) chain. It could alternatively be involved in the synthesis of the galactofuranosyl donor.</text>
</comment>
<comment type="pathway">
    <text>Glycolipid biosynthesis; glycosylphosphatidylinositol-anchor biosynthesis.</text>
</comment>
<comment type="subcellular location">
    <subcellularLocation>
        <location>Endoplasmic reticulum membrane</location>
        <topology>Single-pass type II membrane protein</topology>
    </subcellularLocation>
</comment>
<comment type="developmental stage">
    <text>Expressed throughout the life cycle with a two-fold decrease in amastigotes (LPG is 1000-fold less abundant in amastigotes than in promastigotes).</text>
</comment>
<comment type="similarity">
    <text evidence="2">Belongs to the glycosyltransferase 2 family.</text>
</comment>
<dbReference type="EC" id="2.4.1.-"/>
<dbReference type="EMBL" id="L11348">
    <property type="protein sequence ID" value="AAA03083.1"/>
    <property type="molecule type" value="Unassigned_DNA"/>
</dbReference>
<dbReference type="CAZy" id="GT40">
    <property type="family name" value="Glycosyltransferase Family 40"/>
</dbReference>
<dbReference type="GlyCosmos" id="Q05889">
    <property type="glycosylation" value="4 sites, No reported glycans"/>
</dbReference>
<dbReference type="VEuPathDB" id="TriTrypDB:LdBPK_250010.1"/>
<dbReference type="VEuPathDB" id="TriTrypDB:LdCL_250005000"/>
<dbReference type="VEuPathDB" id="TriTrypDB:LDHU3_25.0020"/>
<dbReference type="UniPathway" id="UPA00196"/>
<dbReference type="GO" id="GO:0005789">
    <property type="term" value="C:endoplasmic reticulum membrane"/>
    <property type="evidence" value="ECO:0007669"/>
    <property type="project" value="UniProtKB-SubCell"/>
</dbReference>
<dbReference type="GO" id="GO:0016757">
    <property type="term" value="F:glycosyltransferase activity"/>
    <property type="evidence" value="ECO:0007669"/>
    <property type="project" value="UniProtKB-KW"/>
</dbReference>
<dbReference type="GO" id="GO:0006506">
    <property type="term" value="P:GPI anchor biosynthetic process"/>
    <property type="evidence" value="ECO:0007669"/>
    <property type="project" value="UniProtKB-UniPathway"/>
</dbReference>
<dbReference type="Gene3D" id="3.90.550.10">
    <property type="entry name" value="Spore Coat Polysaccharide Biosynthesis Protein SpsA, Chain A"/>
    <property type="match status" value="1"/>
</dbReference>
<dbReference type="InterPro" id="IPR029044">
    <property type="entry name" value="Nucleotide-diphossugar_trans"/>
</dbReference>
<dbReference type="PANTHER" id="PTHR43179:SF12">
    <property type="entry name" value="GALACTOFURANOSYLTRANSFERASE GLFT2"/>
    <property type="match status" value="1"/>
</dbReference>
<dbReference type="PANTHER" id="PTHR43179">
    <property type="entry name" value="RHAMNOSYLTRANSFERASE WBBL"/>
    <property type="match status" value="1"/>
</dbReference>
<dbReference type="SUPFAM" id="SSF53448">
    <property type="entry name" value="Nucleotide-diphospho-sugar transferases"/>
    <property type="match status" value="1"/>
</dbReference>
<sequence>MAPPRWHHDRRRMAIFVRVGLYTLLFLMGYVVPLIIFYNRSRADTFEDTPRSGEAFISDENFFHCIAERLSYKEQHPARIPYVLIPVTMDYQDIKQLFCNITVPMTYIMFINNGMFRPLRSLLDRLAVDLRDYVDQNLFIIHHPENIAYASAVNEGLRHALNFSVAKVPWVFITNADVRFAPGLIDEFVSQANEKTQGQLERIRRLDQEIIAEARTLRNVPNRRFAFRSSQHPIITASSLPYRIRTMPPEEMKKQFADTYGIFYTDHKDFMATFALSRLAIATVGFFDENYYPAYGEDHDYVWRMAALGYQKYFSEPGKFVHFENANLNVGGSARNRGIFKNTAYFLQSVKFGRMNYQPFRLQYRRAKWFPDGVTIYQDTGRNPLPFNGTIPLDMWVLDTDRRRSIWEIGENIRCHRDYKPYSMKLLDFPVDPS</sequence>
<gene>
    <name type="primary">LPG1</name>
</gene>
<protein>
    <recommendedName>
        <fullName>Galactofuranosyl glycosyltransferase</fullName>
        <ecNumber>2.4.1.-</ecNumber>
    </recommendedName>
</protein>
<proteinExistence type="evidence at transcript level"/>
<reference key="1">
    <citation type="journal article" date="1993" name="Proc. Natl. Acad. Sci. U.S.A.">
        <title>Isolation of virulence genes directing surface glycosyl-phosphatidylinositol synthesis by functional complementation of Leishmania.</title>
        <authorList>
            <person name="Ryan K.A."/>
            <person name="Garraway L.A."/>
            <person name="Descoteaux A."/>
            <person name="Turco S.J."/>
            <person name="Beverley S.M."/>
        </authorList>
    </citation>
    <scope>NUCLEOTIDE SEQUENCE</scope>
    <source>
        <strain>Ld4</strain>
    </source>
</reference>
<organism>
    <name type="scientific">Leishmania donovani</name>
    <dbReference type="NCBI Taxonomy" id="5661"/>
    <lineage>
        <taxon>Eukaryota</taxon>
        <taxon>Discoba</taxon>
        <taxon>Euglenozoa</taxon>
        <taxon>Kinetoplastea</taxon>
        <taxon>Metakinetoplastina</taxon>
        <taxon>Trypanosomatida</taxon>
        <taxon>Trypanosomatidae</taxon>
        <taxon>Leishmaniinae</taxon>
        <taxon>Leishmania</taxon>
    </lineage>
</organism>
<evidence type="ECO:0000255" key="1"/>
<evidence type="ECO:0000305" key="2"/>
<name>LPG1_LEIDO</name>
<keyword id="KW-0256">Endoplasmic reticulum</keyword>
<keyword id="KW-0325">Glycoprotein</keyword>
<keyword id="KW-0328">Glycosyltransferase</keyword>
<keyword id="KW-0472">Membrane</keyword>
<keyword id="KW-0735">Signal-anchor</keyword>
<keyword id="KW-0808">Transferase</keyword>
<keyword id="KW-0812">Transmembrane</keyword>
<keyword id="KW-1133">Transmembrane helix</keyword>
<keyword id="KW-0843">Virulence</keyword>
<accession>Q05889</accession>